<gene>
    <name type="primary">Plbd1</name>
</gene>
<sequence length="550" mass="63027">MCHRSHGRSLRPPSPLLLLLPLLLQSPWAAGAAEKHNSAGVHYATAYWLPDTKAVEIKMVLDKKGDAYGFYNDSIQTTGWGVLEIKAGYGSQILSNEIIMFLAGYLEGYLTALHMYDHFTNLYPQLIKNPSIVKKVQDFMEKQELWTRKNIKDQKDDPFWRHTGYVVSQLDGMYLGAQKRASEEEMKPMTMFQIQFLNAVGDLLDLIPSLSPTKSSSLKKFKIWEMGHCSALIKVLPGFENIYFAHSSWYTYAAMLRIYKHWDFNIKDKYTASNRLSFSSYPGFLESLDDFYILSSGLILLQTTNSVYNKTLLKLVVPESLLAWQRVRVANMMAQGGKEWSQLFSMYNSGTYNNQYMVLDLKKVTLKKSIDRGALYVVEQIPTYVEYSDQTNILRKGYWASYNIPFHKTVYNWSGYPLLVHKLGLDYSYDLAPRAKIFRRDQGTVTDMASMKHIMRYNNYKVDPYSKGDPCSTICCREDLNEASPSPGGCYDTKVADIFLASQYKAYAISGPTVQNGLPPFNWNRFNDTLHQGMPDVFDFDFVTMKPILT</sequence>
<protein>
    <recommendedName>
        <fullName>Phospholipase B-like 1</fullName>
        <ecNumber>3.1.1.-</ecNumber>
    </recommendedName>
    <alternativeName>
        <fullName>LAMA-like protein 1</fullName>
    </alternativeName>
    <alternativeName>
        <fullName>Lamina ancestor homolog 1</fullName>
    </alternativeName>
    <alternativeName>
        <fullName>Phospholipase B domain-containing protein 1</fullName>
    </alternativeName>
    <component>
        <recommendedName>
            <fullName>Phospholipase B-like 1 chain A</fullName>
        </recommendedName>
    </component>
    <component>
        <recommendedName>
            <fullName>Phospholipase B-like 1 chain B</fullName>
        </recommendedName>
    </component>
    <component>
        <recommendedName>
            <fullName>Phospholipase B-like 1 chain C</fullName>
        </recommendedName>
    </component>
</protein>
<comment type="function">
    <text evidence="1">Exhibits weak phospholipase activity, acting on various phospholipids, including phosphatidylcholine, phosphatidylinositol, phosphatidylethanolamine and lysophospholipids. However, in view of the small size of the putative binding pocket, it has been proposed that it may act rather as an amidase or a peptidase (By similarity).</text>
</comment>
<comment type="subunit">
    <text evidence="1">May form a homodimer, each monomer is composed of a chain A and a chain B.</text>
</comment>
<comment type="subcellular location">
    <subcellularLocation>
        <location evidence="1">Lysosome</location>
    </subcellularLocation>
</comment>
<comment type="PTM">
    <text evidence="1">The maturation cleavages that produces chains A and B are required to open the putative substrate binding pocket. Both chains A and B remain associated in the mature protein (By similarity).</text>
</comment>
<comment type="similarity">
    <text evidence="2">Belongs to the phospholipase B-like family.</text>
</comment>
<keyword id="KW-1015">Disulfide bond</keyword>
<keyword id="KW-0325">Glycoprotein</keyword>
<keyword id="KW-0378">Hydrolase</keyword>
<keyword id="KW-0442">Lipid degradation</keyword>
<keyword id="KW-0443">Lipid metabolism</keyword>
<keyword id="KW-0458">Lysosome</keyword>
<keyword id="KW-1185">Reference proteome</keyword>
<keyword id="KW-0732">Signal</keyword>
<organism>
    <name type="scientific">Rattus norvegicus</name>
    <name type="common">Rat</name>
    <dbReference type="NCBI Taxonomy" id="10116"/>
    <lineage>
        <taxon>Eukaryota</taxon>
        <taxon>Metazoa</taxon>
        <taxon>Chordata</taxon>
        <taxon>Craniata</taxon>
        <taxon>Vertebrata</taxon>
        <taxon>Euteleostomi</taxon>
        <taxon>Mammalia</taxon>
        <taxon>Eutheria</taxon>
        <taxon>Euarchontoglires</taxon>
        <taxon>Glires</taxon>
        <taxon>Rodentia</taxon>
        <taxon>Myomorpha</taxon>
        <taxon>Muroidea</taxon>
        <taxon>Muridae</taxon>
        <taxon>Murinae</taxon>
        <taxon>Rattus</taxon>
    </lineage>
</organism>
<feature type="signal peptide" evidence="1">
    <location>
        <begin position="1"/>
        <end position="39"/>
    </location>
</feature>
<feature type="chain" id="PRO_0000286108" description="Phospholipase B-like 1">
    <location>
        <begin position="40"/>
        <end position="550"/>
    </location>
</feature>
<feature type="chain" id="PRO_0000425429" description="Phospholipase B-like 1 chain A">
    <location>
        <begin position="40"/>
        <end position="209"/>
    </location>
</feature>
<feature type="chain" id="PRO_0000425430" description="Phospholipase B-like 1 chain C">
    <location>
        <begin position="94"/>
        <end position="209"/>
    </location>
</feature>
<feature type="propeptide" id="PRO_0000425431" description="Removed in mature form" evidence="1">
    <location>
        <begin position="210"/>
        <end position="228"/>
    </location>
</feature>
<feature type="chain" id="PRO_0000425432" description="Phospholipase B-like 1 chain B">
    <location>
        <begin position="229"/>
        <end position="550"/>
    </location>
</feature>
<feature type="glycosylation site" description="N-linked (GlcNAc...) (high mannose) asparagine; alternate" evidence="1">
    <location>
        <position position="72"/>
    </location>
</feature>
<feature type="glycosylation site" description="N-linked (GlcNAc...) (hybrid) asparagine; alternate" evidence="1">
    <location>
        <position position="72"/>
    </location>
</feature>
<feature type="glycosylation site" description="N-linked (GlcNAc...) (high mannose) asparagine; alternate" evidence="1">
    <location>
        <position position="309"/>
    </location>
</feature>
<feature type="glycosylation site" description="N-linked (GlcNAc...) (hybrid) asparagine; alternate" evidence="1">
    <location>
        <position position="309"/>
    </location>
</feature>
<feature type="glycosylation site" description="N-linked (GlcNAc...) (high mannose) asparagine; alternate" evidence="1">
    <location>
        <position position="412"/>
    </location>
</feature>
<feature type="glycosylation site" description="N-linked (GlcNAc...) (hybrid) asparagine; alternate" evidence="1">
    <location>
        <position position="412"/>
    </location>
</feature>
<feature type="glycosylation site" description="N-linked (GlcNAc...) (high mannose) asparagine; alternate" evidence="1">
    <location>
        <position position="527"/>
    </location>
</feature>
<feature type="glycosylation site" description="N-linked (GlcNAc...) (hybrid) asparagine; alternate" evidence="1">
    <location>
        <position position="527"/>
    </location>
</feature>
<feature type="disulfide bond" evidence="1">
    <location>
        <begin position="471"/>
        <end position="476"/>
    </location>
</feature>
<feature type="disulfide bond" evidence="1">
    <location>
        <begin position="475"/>
        <end position="490"/>
    </location>
</feature>
<name>PLBL1_RAT</name>
<evidence type="ECO:0000250" key="1"/>
<evidence type="ECO:0000305" key="2"/>
<accession>Q5U2V4</accession>
<reference key="1">
    <citation type="journal article" date="2004" name="Genome Res.">
        <title>The status, quality, and expansion of the NIH full-length cDNA project: the Mammalian Gene Collection (MGC).</title>
        <authorList>
            <consortium name="The MGC Project Team"/>
        </authorList>
    </citation>
    <scope>NUCLEOTIDE SEQUENCE [LARGE SCALE MRNA]</scope>
    <source>
        <tissue>Heart</tissue>
    </source>
</reference>
<proteinExistence type="evidence at transcript level"/>
<dbReference type="EC" id="3.1.1.-"/>
<dbReference type="EMBL" id="BC085851">
    <property type="protein sequence ID" value="AAH85851.1"/>
    <property type="molecule type" value="mRNA"/>
</dbReference>
<dbReference type="RefSeq" id="NP_001013949.1">
    <property type="nucleotide sequence ID" value="NM_001013927.1"/>
</dbReference>
<dbReference type="SMR" id="Q5U2V4"/>
<dbReference type="BioGRID" id="255637">
    <property type="interactions" value="2"/>
</dbReference>
<dbReference type="FunCoup" id="Q5U2V4">
    <property type="interactions" value="214"/>
</dbReference>
<dbReference type="IntAct" id="Q5U2V4">
    <property type="interactions" value="1"/>
</dbReference>
<dbReference type="STRING" id="10116.ENSRNOP00000011930"/>
<dbReference type="GlyCosmos" id="Q5U2V4">
    <property type="glycosylation" value="4 sites, No reported glycans"/>
</dbReference>
<dbReference type="GlyGen" id="Q5U2V4">
    <property type="glycosylation" value="4 sites"/>
</dbReference>
<dbReference type="PhosphoSitePlus" id="Q5U2V4"/>
<dbReference type="SwissPalm" id="Q5U2V4"/>
<dbReference type="PaxDb" id="10116-ENSRNOP00000011930"/>
<dbReference type="Ensembl" id="ENSRNOT00000011930.7">
    <property type="protein sequence ID" value="ENSRNOP00000011930.5"/>
    <property type="gene ID" value="ENSRNOG00000008933.7"/>
</dbReference>
<dbReference type="GeneID" id="297694"/>
<dbReference type="KEGG" id="rno:297694"/>
<dbReference type="UCSC" id="RGD:1308734">
    <property type="organism name" value="rat"/>
</dbReference>
<dbReference type="AGR" id="RGD:1308734"/>
<dbReference type="CTD" id="79887"/>
<dbReference type="RGD" id="1308734">
    <property type="gene designation" value="Plbd1"/>
</dbReference>
<dbReference type="eggNOG" id="KOG3774">
    <property type="taxonomic scope" value="Eukaryota"/>
</dbReference>
<dbReference type="GeneTree" id="ENSGT00530000063509"/>
<dbReference type="HOGENOM" id="CLU_027106_3_0_1"/>
<dbReference type="InParanoid" id="Q5U2V4"/>
<dbReference type="OMA" id="MYDHFTN"/>
<dbReference type="OrthoDB" id="419508at2759"/>
<dbReference type="PhylomeDB" id="Q5U2V4"/>
<dbReference type="TreeFam" id="TF315042"/>
<dbReference type="Reactome" id="R-RNO-1482788">
    <property type="pathway name" value="Acyl chain remodelling of PC"/>
</dbReference>
<dbReference type="Reactome" id="R-RNO-1482839">
    <property type="pathway name" value="Acyl chain remodelling of PE"/>
</dbReference>
<dbReference type="Reactome" id="R-RNO-1482922">
    <property type="pathway name" value="Acyl chain remodelling of PI"/>
</dbReference>
<dbReference type="Reactome" id="R-RNO-1483115">
    <property type="pathway name" value="Hydrolysis of LPC"/>
</dbReference>
<dbReference type="PRO" id="PR:Q5U2V4"/>
<dbReference type="Proteomes" id="UP000002494">
    <property type="component" value="Chromosome 4"/>
</dbReference>
<dbReference type="Bgee" id="ENSRNOG00000008933">
    <property type="expression patterns" value="Expressed in ovary and 19 other cell types or tissues"/>
</dbReference>
<dbReference type="GO" id="GO:0005576">
    <property type="term" value="C:extracellular region"/>
    <property type="evidence" value="ECO:0000318"/>
    <property type="project" value="GO_Central"/>
</dbReference>
<dbReference type="GO" id="GO:0005615">
    <property type="term" value="C:extracellular space"/>
    <property type="evidence" value="ECO:0000266"/>
    <property type="project" value="RGD"/>
</dbReference>
<dbReference type="GO" id="GO:0005764">
    <property type="term" value="C:lysosome"/>
    <property type="evidence" value="ECO:0007669"/>
    <property type="project" value="UniProtKB-SubCell"/>
</dbReference>
<dbReference type="GO" id="GO:0004620">
    <property type="term" value="F:phospholipase activity"/>
    <property type="evidence" value="ECO:0000318"/>
    <property type="project" value="GO_Central"/>
</dbReference>
<dbReference type="GO" id="GO:0009395">
    <property type="term" value="P:phospholipid catabolic process"/>
    <property type="evidence" value="ECO:0000318"/>
    <property type="project" value="GO_Central"/>
</dbReference>
<dbReference type="FunFam" id="3.60.60.20:FF:000001">
    <property type="entry name" value="Phospholipase B-like"/>
    <property type="match status" value="1"/>
</dbReference>
<dbReference type="Gene3D" id="3.60.60.20">
    <property type="match status" value="1"/>
</dbReference>
<dbReference type="Gene3D" id="2.10.70.60">
    <property type="entry name" value="Phospholipase B-like, domain 1"/>
    <property type="match status" value="1"/>
</dbReference>
<dbReference type="Gene3D" id="1.10.439.20">
    <property type="entry name" value="Phospholipase B-like, domain 2"/>
    <property type="match status" value="1"/>
</dbReference>
<dbReference type="InterPro" id="IPR007000">
    <property type="entry name" value="PLipase_B-like"/>
</dbReference>
<dbReference type="InterPro" id="IPR043040">
    <property type="entry name" value="PLipase_B-like_dom1"/>
</dbReference>
<dbReference type="InterPro" id="IPR043041">
    <property type="entry name" value="PLipase_B-like_dom2"/>
</dbReference>
<dbReference type="InterPro" id="IPR043042">
    <property type="entry name" value="PLipase_B-like_dom3"/>
</dbReference>
<dbReference type="PANTHER" id="PTHR12370:SF1">
    <property type="entry name" value="PHOSPHOLIPASE B-LIKE 1"/>
    <property type="match status" value="1"/>
</dbReference>
<dbReference type="PANTHER" id="PTHR12370">
    <property type="entry name" value="PHOSPHOLIPASE B-RELATED"/>
    <property type="match status" value="1"/>
</dbReference>
<dbReference type="Pfam" id="PF04916">
    <property type="entry name" value="Phospholip_B"/>
    <property type="match status" value="1"/>
</dbReference>